<proteinExistence type="inferred from homology"/>
<gene>
    <name evidence="1" type="primary">azoR</name>
    <name type="ordered locus">BPUM_0385</name>
</gene>
<accession>A8FA13</accession>
<evidence type="ECO:0000255" key="1">
    <source>
        <dbReference type="HAMAP-Rule" id="MF_01216"/>
    </source>
</evidence>
<organism>
    <name type="scientific">Bacillus pumilus (strain SAFR-032)</name>
    <dbReference type="NCBI Taxonomy" id="315750"/>
    <lineage>
        <taxon>Bacteria</taxon>
        <taxon>Bacillati</taxon>
        <taxon>Bacillota</taxon>
        <taxon>Bacilli</taxon>
        <taxon>Bacillales</taxon>
        <taxon>Bacillaceae</taxon>
        <taxon>Bacillus</taxon>
    </lineage>
</organism>
<protein>
    <recommendedName>
        <fullName evidence="1">FMN-dependent NADH:quinone oxidoreductase</fullName>
        <ecNumber evidence="1">1.6.5.-</ecNumber>
    </recommendedName>
    <alternativeName>
        <fullName evidence="1">Azo-dye reductase</fullName>
    </alternativeName>
    <alternativeName>
        <fullName evidence="1">FMN-dependent NADH-azo compound oxidoreductase</fullName>
    </alternativeName>
    <alternativeName>
        <fullName evidence="1">FMN-dependent NADH-azoreductase</fullName>
        <ecNumber evidence="1">1.7.1.17</ecNumber>
    </alternativeName>
</protein>
<name>AZOR_BACP2</name>
<reference key="1">
    <citation type="journal article" date="2007" name="PLoS ONE">
        <title>Paradoxical DNA repair and peroxide resistance gene conservation in Bacillus pumilus SAFR-032.</title>
        <authorList>
            <person name="Gioia J."/>
            <person name="Yerrapragada S."/>
            <person name="Qin X."/>
            <person name="Jiang H."/>
            <person name="Igboeli O.C."/>
            <person name="Muzny D."/>
            <person name="Dugan-Rocha S."/>
            <person name="Ding Y."/>
            <person name="Hawes A."/>
            <person name="Liu W."/>
            <person name="Perez L."/>
            <person name="Kovar C."/>
            <person name="Dinh H."/>
            <person name="Lee S."/>
            <person name="Nazareth L."/>
            <person name="Blyth P."/>
            <person name="Holder M."/>
            <person name="Buhay C."/>
            <person name="Tirumalai M.R."/>
            <person name="Liu Y."/>
            <person name="Dasgupta I."/>
            <person name="Bokhetache L."/>
            <person name="Fujita M."/>
            <person name="Karouia F."/>
            <person name="Eswara Moorthy P."/>
            <person name="Siefert J."/>
            <person name="Uzman A."/>
            <person name="Buzumbo P."/>
            <person name="Verma A."/>
            <person name="Zwiya H."/>
            <person name="McWilliams B.D."/>
            <person name="Olowu A."/>
            <person name="Clinkenbeard K.D."/>
            <person name="Newcombe D."/>
            <person name="Golebiewski L."/>
            <person name="Petrosino J.F."/>
            <person name="Nicholson W.L."/>
            <person name="Fox G.E."/>
            <person name="Venkateswaran K."/>
            <person name="Highlander S.K."/>
            <person name="Weinstock G.M."/>
        </authorList>
    </citation>
    <scope>NUCLEOTIDE SEQUENCE [LARGE SCALE GENOMIC DNA]</scope>
    <source>
        <strain>SAFR-032</strain>
    </source>
</reference>
<comment type="function">
    <text evidence="1">Quinone reductase that provides resistance to thiol-specific stress caused by electrophilic quinones.</text>
</comment>
<comment type="function">
    <text evidence="1">Also exhibits azoreductase activity. Catalyzes the reductive cleavage of the azo bond in aromatic azo compounds to the corresponding amines.</text>
</comment>
<comment type="catalytic activity">
    <reaction evidence="1">
        <text>2 a quinone + NADH + H(+) = 2 a 1,4-benzosemiquinone + NAD(+)</text>
        <dbReference type="Rhea" id="RHEA:65952"/>
        <dbReference type="ChEBI" id="CHEBI:15378"/>
        <dbReference type="ChEBI" id="CHEBI:57540"/>
        <dbReference type="ChEBI" id="CHEBI:57945"/>
        <dbReference type="ChEBI" id="CHEBI:132124"/>
        <dbReference type="ChEBI" id="CHEBI:134225"/>
    </reaction>
</comment>
<comment type="catalytic activity">
    <reaction evidence="1">
        <text>N,N-dimethyl-1,4-phenylenediamine + anthranilate + 2 NAD(+) = 2-(4-dimethylaminophenyl)diazenylbenzoate + 2 NADH + 2 H(+)</text>
        <dbReference type="Rhea" id="RHEA:55872"/>
        <dbReference type="ChEBI" id="CHEBI:15378"/>
        <dbReference type="ChEBI" id="CHEBI:15783"/>
        <dbReference type="ChEBI" id="CHEBI:16567"/>
        <dbReference type="ChEBI" id="CHEBI:57540"/>
        <dbReference type="ChEBI" id="CHEBI:57945"/>
        <dbReference type="ChEBI" id="CHEBI:71579"/>
        <dbReference type="EC" id="1.7.1.17"/>
    </reaction>
</comment>
<comment type="cofactor">
    <cofactor evidence="1">
        <name>FMN</name>
        <dbReference type="ChEBI" id="CHEBI:58210"/>
    </cofactor>
    <text evidence="1">Binds 1 FMN per subunit.</text>
</comment>
<comment type="subunit">
    <text evidence="1">Homodimer.</text>
</comment>
<comment type="similarity">
    <text evidence="1">Belongs to the azoreductase type 1 family.</text>
</comment>
<feature type="chain" id="PRO_1000066495" description="FMN-dependent NADH:quinone oxidoreductase">
    <location>
        <begin position="1"/>
        <end position="211"/>
    </location>
</feature>
<feature type="binding site" evidence="1">
    <location>
        <begin position="17"/>
        <end position="19"/>
    </location>
    <ligand>
        <name>FMN</name>
        <dbReference type="ChEBI" id="CHEBI:58210"/>
    </ligand>
</feature>
<sequence>MAKVLYITAHPHDETVSYSMATAKAFIESYKEANPSDEVVHIDLYKENIPHIDADVFAGWGKLQSGAGFDTLSAEEQAKVARLNELSDQFVSADKYVFVSPLWNFSFPPVLKAYIDSVAVAGKTFKYTEQGPVGLLTDKKALHIQARGGYYTEGPAAELEAGHRYLGTIASFFGIPSFEGLIVEGHNAEPAKAEQIKADAIERAKALGKTF</sequence>
<keyword id="KW-0285">Flavoprotein</keyword>
<keyword id="KW-0288">FMN</keyword>
<keyword id="KW-0520">NAD</keyword>
<keyword id="KW-0560">Oxidoreductase</keyword>
<dbReference type="EC" id="1.6.5.-" evidence="1"/>
<dbReference type="EC" id="1.7.1.17" evidence="1"/>
<dbReference type="EMBL" id="CP000813">
    <property type="protein sequence ID" value="ABV61080.1"/>
    <property type="molecule type" value="Genomic_DNA"/>
</dbReference>
<dbReference type="RefSeq" id="WP_003214444.1">
    <property type="nucleotide sequence ID" value="NZ_VEIS01000004.1"/>
</dbReference>
<dbReference type="SMR" id="A8FA13"/>
<dbReference type="GeneID" id="5619637"/>
<dbReference type="KEGG" id="bpu:BPUM_0385"/>
<dbReference type="eggNOG" id="COG1182">
    <property type="taxonomic scope" value="Bacteria"/>
</dbReference>
<dbReference type="HOGENOM" id="CLU_088964_3_1_9"/>
<dbReference type="OrthoDB" id="9805013at2"/>
<dbReference type="Proteomes" id="UP000001355">
    <property type="component" value="Chromosome"/>
</dbReference>
<dbReference type="GO" id="GO:0009055">
    <property type="term" value="F:electron transfer activity"/>
    <property type="evidence" value="ECO:0007669"/>
    <property type="project" value="UniProtKB-UniRule"/>
</dbReference>
<dbReference type="GO" id="GO:0010181">
    <property type="term" value="F:FMN binding"/>
    <property type="evidence" value="ECO:0007669"/>
    <property type="project" value="UniProtKB-UniRule"/>
</dbReference>
<dbReference type="GO" id="GO:0016652">
    <property type="term" value="F:oxidoreductase activity, acting on NAD(P)H as acceptor"/>
    <property type="evidence" value="ECO:0007669"/>
    <property type="project" value="UniProtKB-UniRule"/>
</dbReference>
<dbReference type="GO" id="GO:0016655">
    <property type="term" value="F:oxidoreductase activity, acting on NAD(P)H, quinone or similar compound as acceptor"/>
    <property type="evidence" value="ECO:0007669"/>
    <property type="project" value="InterPro"/>
</dbReference>
<dbReference type="Gene3D" id="3.40.50.360">
    <property type="match status" value="1"/>
</dbReference>
<dbReference type="HAMAP" id="MF_01216">
    <property type="entry name" value="Azoreductase_type1"/>
    <property type="match status" value="1"/>
</dbReference>
<dbReference type="InterPro" id="IPR003680">
    <property type="entry name" value="Flavodoxin_fold"/>
</dbReference>
<dbReference type="InterPro" id="IPR029039">
    <property type="entry name" value="Flavoprotein-like_sf"/>
</dbReference>
<dbReference type="InterPro" id="IPR050104">
    <property type="entry name" value="FMN-dep_NADH:Q_OxRdtase_AzoR1"/>
</dbReference>
<dbReference type="InterPro" id="IPR023048">
    <property type="entry name" value="NADH:quinone_OxRdtase_FMN_depd"/>
</dbReference>
<dbReference type="NCBIfam" id="NF010075">
    <property type="entry name" value="PRK13556.1"/>
    <property type="match status" value="1"/>
</dbReference>
<dbReference type="PANTHER" id="PTHR43741">
    <property type="entry name" value="FMN-DEPENDENT NADH-AZOREDUCTASE 1"/>
    <property type="match status" value="1"/>
</dbReference>
<dbReference type="PANTHER" id="PTHR43741:SF7">
    <property type="entry name" value="FMN-DEPENDENT NADH:QUINONE OXIDOREDUCTASE"/>
    <property type="match status" value="1"/>
</dbReference>
<dbReference type="Pfam" id="PF02525">
    <property type="entry name" value="Flavodoxin_2"/>
    <property type="match status" value="1"/>
</dbReference>
<dbReference type="SUPFAM" id="SSF52218">
    <property type="entry name" value="Flavoproteins"/>
    <property type="match status" value="1"/>
</dbReference>